<name>KRP3_ARATH</name>
<organism>
    <name type="scientific">Arabidopsis thaliana</name>
    <name type="common">Mouse-ear cress</name>
    <dbReference type="NCBI Taxonomy" id="3702"/>
    <lineage>
        <taxon>Eukaryota</taxon>
        <taxon>Viridiplantae</taxon>
        <taxon>Streptophyta</taxon>
        <taxon>Embryophyta</taxon>
        <taxon>Tracheophyta</taxon>
        <taxon>Spermatophyta</taxon>
        <taxon>Magnoliopsida</taxon>
        <taxon>eudicotyledons</taxon>
        <taxon>Gunneridae</taxon>
        <taxon>Pentapetalae</taxon>
        <taxon>rosids</taxon>
        <taxon>malvids</taxon>
        <taxon>Brassicales</taxon>
        <taxon>Brassicaceae</taxon>
        <taxon>Camelineae</taxon>
        <taxon>Arabidopsis</taxon>
    </lineage>
</organism>
<proteinExistence type="evidence at protein level"/>
<evidence type="ECO:0000256" key="1">
    <source>
        <dbReference type="SAM" id="MobiDB-lite"/>
    </source>
</evidence>
<evidence type="ECO:0000269" key="2">
    <source>
    </source>
</evidence>
<evidence type="ECO:0000269" key="3">
    <source>
    </source>
</evidence>
<evidence type="ECO:0000269" key="4">
    <source>
    </source>
</evidence>
<evidence type="ECO:0000269" key="5">
    <source>
    </source>
</evidence>
<evidence type="ECO:0000269" key="6">
    <source>
    </source>
</evidence>
<evidence type="ECO:0000305" key="7"/>
<accession>Q9FKB5</accession>
<gene>
    <name type="primary">KRP3</name>
    <name type="synonym">ICK6</name>
    <name type="ordered locus">At5g48820</name>
    <name type="ORF">K24G6.15</name>
</gene>
<protein>
    <recommendedName>
        <fullName>Cyclin-dependent kinase inhibitor 3</fullName>
    </recommendedName>
    <alternativeName>
        <fullName>Inhibitor/interactor of CDK protein 6</fullName>
    </alternativeName>
    <alternativeName>
        <fullName>KIP-related protein 3</fullName>
    </alternativeName>
</protein>
<comment type="function">
    <text evidence="5">Binds and inhibits CYCD2-1/CDKA-1 complex kinase activity. May target specifically CDKA-1.</text>
</comment>
<comment type="subunit">
    <text evidence="2">Specifically interacts with CDKA-1, but not with CDKB1-1.</text>
</comment>
<comment type="interaction">
    <interactant intactId="EBI-1773302">
        <id>Q9FKB5</id>
    </interactant>
    <interactant intactId="EBI-371713">
        <id>P24100</id>
        <label>CDKA-1</label>
    </interactant>
    <organismsDiffer>false</organismsDiffer>
    <experiments>4</experiments>
</comment>
<comment type="subcellular location">
    <subcellularLocation>
        <location evidence="6">Nucleus</location>
        <location evidence="6">Nucleoplasm</location>
    </subcellularLocation>
    <text>Distributed in a ponctuate pattern.</text>
</comment>
<comment type="alternative products">
    <event type="alternative splicing"/>
    <isoform>
        <id>Q9FKB5-1</id>
        <name>1</name>
        <sequence type="displayed"/>
    </isoform>
    <text>A number of isoforms are produced. According to EST sequences.</text>
</comment>
<comment type="developmental stage">
    <text evidence="2 3 4">Highly expressed in actively dividing cells of root pericycle and suspension cell culture. Expressed in the G1/S phases and reaches a peak at the G2 phase.</text>
</comment>
<comment type="induction">
    <text evidence="4">By auxin in roots.</text>
</comment>
<comment type="miscellaneous">
    <text>Treatment with auxin induces lateral root initiation.</text>
</comment>
<comment type="similarity">
    <text evidence="7">Belongs to the CDI family. ICK/KRP subfamily.</text>
</comment>
<feature type="chain" id="PRO_0000294092" description="Cyclin-dependent kinase inhibitor 3">
    <location>
        <begin position="1"/>
        <end position="222"/>
    </location>
</feature>
<feature type="region of interest" description="Disordered" evidence="1">
    <location>
        <begin position="68"/>
        <end position="101"/>
    </location>
</feature>
<feature type="compositionally biased region" description="Basic and acidic residues" evidence="1">
    <location>
        <begin position="85"/>
        <end position="95"/>
    </location>
</feature>
<reference key="1">
    <citation type="journal article" date="2001" name="Plant Cell">
        <title>Functional analysis of cyclin-dependent kinase inhibitors of Arabidopsis.</title>
        <authorList>
            <person name="de Veylder L."/>
            <person name="Beeckman T."/>
            <person name="Beemster G.T.S."/>
            <person name="Krols L."/>
            <person name="Terras F."/>
            <person name="Landrieu I."/>
            <person name="van der Schueren E."/>
            <person name="Maes S."/>
            <person name="Naudts M."/>
            <person name="Inze D."/>
        </authorList>
    </citation>
    <scope>NUCLEOTIDE SEQUENCE [MRNA]</scope>
    <scope>DEVELOPMENTAL STAGE</scope>
    <scope>INTERACTION WITH CDKA-1</scope>
    <source>
        <strain>cv. Columbia</strain>
    </source>
</reference>
<reference key="2">
    <citation type="journal article" date="1998" name="DNA Res.">
        <title>Structural analysis of Arabidopsis thaliana chromosome 5. VI. Sequence features of the regions of 1,367,185 bp covered by 19 physically assigned P1 and TAC clones.</title>
        <authorList>
            <person name="Kotani H."/>
            <person name="Nakamura Y."/>
            <person name="Sato S."/>
            <person name="Asamizu E."/>
            <person name="Kaneko T."/>
            <person name="Miyajima N."/>
            <person name="Tabata S."/>
        </authorList>
    </citation>
    <scope>NUCLEOTIDE SEQUENCE [LARGE SCALE GENOMIC DNA]</scope>
    <source>
        <strain>cv. Columbia</strain>
    </source>
</reference>
<reference key="3">
    <citation type="journal article" date="2017" name="Plant J.">
        <title>Araport11: a complete reannotation of the Arabidopsis thaliana reference genome.</title>
        <authorList>
            <person name="Cheng C.Y."/>
            <person name="Krishnakumar V."/>
            <person name="Chan A.P."/>
            <person name="Thibaud-Nissen F."/>
            <person name="Schobel S."/>
            <person name="Town C.D."/>
        </authorList>
    </citation>
    <scope>GENOME REANNOTATION</scope>
    <source>
        <strain>cv. Columbia</strain>
    </source>
</reference>
<reference key="4">
    <citation type="submission" date="2006-04" db="EMBL/GenBank/DDBJ databases">
        <title>Arabidopsis ORF clones.</title>
        <authorList>
            <person name="Shinn P."/>
            <person name="Chen H."/>
            <person name="Kim C.J."/>
            <person name="Ecker J.R."/>
        </authorList>
    </citation>
    <scope>NUCLEOTIDE SEQUENCE [LARGE SCALE MRNA]</scope>
    <source>
        <strain>cv. Columbia</strain>
    </source>
</reference>
<reference key="5">
    <citation type="journal article" date="2002" name="Plant J.">
        <title>Synchronous Arabidopsis suspension cultures for analysis of cell-cycle gene activity.</title>
        <authorList>
            <person name="Menges M."/>
            <person name="Murray J.A.H."/>
        </authorList>
    </citation>
    <scope>DEVELOPMENTAL STAGE</scope>
</reference>
<reference key="6">
    <citation type="journal article" date="2002" name="Plant Cell">
        <title>Auxin-mediated cell cycle activation during early lateral root initiation.</title>
        <authorList>
            <person name="Himanen K."/>
            <person name="Boucheron E."/>
            <person name="Vanneste S."/>
            <person name="de Almeida Engler J."/>
            <person name="Inze D."/>
            <person name="Beeckman T."/>
        </authorList>
    </citation>
    <scope>DEVELOPMENTAL STAGE</scope>
    <scope>INDUCTION</scope>
</reference>
<reference key="7">
    <citation type="journal article" date="2006" name="FEBS Lett.">
        <title>Arabidopsis KRPs have distinct inhibitory activity toward cyclin D2-associated kinases, including plant-specific B-type cyclin-dependent kinase.</title>
        <authorList>
            <person name="Nakai T."/>
            <person name="Kato K."/>
            <person name="Shinmyo A."/>
            <person name="Sekine M."/>
        </authorList>
    </citation>
    <scope>FUNCTION</scope>
</reference>
<reference key="8">
    <citation type="journal article" date="2007" name="Plant Cell Rep.">
        <title>Arabidopsis cyclin-dependent kinase inhibitors are nuclear-localized and show different localization patterns within the nucleoplasm.</title>
        <authorList>
            <person name="Bird D.A."/>
            <person name="Buruiana M.M."/>
            <person name="Zhou Y."/>
            <person name="Fowke L.C."/>
            <person name="Wang H."/>
        </authorList>
    </citation>
    <scope>SUBCELLULAR LOCATION</scope>
</reference>
<sequence>MGKYMKKSKITGDISVMEVSKATAPSPGVRTRAAKTLALKRLNSSAADSALPNDSSCYLQLRSRRLEKPSSLIEPKQPPRVHRSGIKESGSRSRVDSVNSVPVAQSSNEDECFDNFVSVQVSCGENSLGFESRHSTRESTPCNFVEDMEIMVTPGSSTRSMCRATKEYTREQDNVIPTTSEMEEFFAYAEQQQQRLFMEKYNFDIVNDIPLSGRYEWVQVKP</sequence>
<keyword id="KW-0025">Alternative splicing</keyword>
<keyword id="KW-0131">Cell cycle</keyword>
<keyword id="KW-0539">Nucleus</keyword>
<keyword id="KW-0649">Protein kinase inhibitor</keyword>
<keyword id="KW-1185">Reference proteome</keyword>
<dbReference type="EMBL" id="AJ301554">
    <property type="protein sequence ID" value="CAC41617.1"/>
    <property type="molecule type" value="mRNA"/>
</dbReference>
<dbReference type="EMBL" id="AB012242">
    <property type="protein sequence ID" value="BAB09435.1"/>
    <property type="molecule type" value="Genomic_DNA"/>
</dbReference>
<dbReference type="EMBL" id="CP002688">
    <property type="protein sequence ID" value="AED95728.1"/>
    <property type="molecule type" value="Genomic_DNA"/>
</dbReference>
<dbReference type="EMBL" id="BT025290">
    <property type="protein sequence ID" value="ABF19043.1"/>
    <property type="molecule type" value="mRNA"/>
</dbReference>
<dbReference type="RefSeq" id="NP_199693.1">
    <molecule id="Q9FKB5-1"/>
    <property type="nucleotide sequence ID" value="NM_124259.2"/>
</dbReference>
<dbReference type="BioGRID" id="20186">
    <property type="interactions" value="28"/>
</dbReference>
<dbReference type="FunCoup" id="Q9FKB5">
    <property type="interactions" value="217"/>
</dbReference>
<dbReference type="IntAct" id="Q9FKB5">
    <property type="interactions" value="13"/>
</dbReference>
<dbReference type="STRING" id="3702.Q9FKB5"/>
<dbReference type="iPTMnet" id="Q9FKB5"/>
<dbReference type="PaxDb" id="3702-AT5G48820.2"/>
<dbReference type="EnsemblPlants" id="AT5G48820.1">
    <molecule id="Q9FKB5-1"/>
    <property type="protein sequence ID" value="AT5G48820.1"/>
    <property type="gene ID" value="AT5G48820"/>
</dbReference>
<dbReference type="GeneID" id="834940"/>
<dbReference type="Gramene" id="AT5G48820.1">
    <molecule id="Q9FKB5-1"/>
    <property type="protein sequence ID" value="AT5G48820.1"/>
    <property type="gene ID" value="AT5G48820"/>
</dbReference>
<dbReference type="KEGG" id="ath:AT5G48820"/>
<dbReference type="Araport" id="AT5G48820"/>
<dbReference type="TAIR" id="AT5G48820">
    <property type="gene designation" value="ICK6"/>
</dbReference>
<dbReference type="eggNOG" id="ENOG502QXA1">
    <property type="taxonomic scope" value="Eukaryota"/>
</dbReference>
<dbReference type="HOGENOM" id="CLU_083146_0_1_1"/>
<dbReference type="InParanoid" id="Q9FKB5"/>
<dbReference type="OMA" id="ASTHETK"/>
<dbReference type="OrthoDB" id="6373236at2759"/>
<dbReference type="PhylomeDB" id="Q9FKB5"/>
<dbReference type="PRO" id="PR:Q9FKB5"/>
<dbReference type="Proteomes" id="UP000006548">
    <property type="component" value="Chromosome 5"/>
</dbReference>
<dbReference type="ExpressionAtlas" id="Q9FKB5">
    <property type="expression patterns" value="baseline and differential"/>
</dbReference>
<dbReference type="GO" id="GO:0005654">
    <property type="term" value="C:nucleoplasm"/>
    <property type="evidence" value="ECO:0007669"/>
    <property type="project" value="UniProtKB-SubCell"/>
</dbReference>
<dbReference type="GO" id="GO:0004861">
    <property type="term" value="F:cyclin-dependent protein serine/threonine kinase inhibitor activity"/>
    <property type="evidence" value="ECO:0007669"/>
    <property type="project" value="InterPro"/>
</dbReference>
<dbReference type="GO" id="GO:0051726">
    <property type="term" value="P:regulation of cell cycle"/>
    <property type="evidence" value="ECO:0007669"/>
    <property type="project" value="InterPro"/>
</dbReference>
<dbReference type="FunFam" id="4.10.365.10:FF:000004">
    <property type="entry name" value="Cyclin-dependent kinase inhibitor 4"/>
    <property type="match status" value="1"/>
</dbReference>
<dbReference type="Gene3D" id="4.10.365.10">
    <property type="entry name" value="p27"/>
    <property type="match status" value="1"/>
</dbReference>
<dbReference type="InterPro" id="IPR003175">
    <property type="entry name" value="CDI_dom"/>
</dbReference>
<dbReference type="InterPro" id="IPR044898">
    <property type="entry name" value="CDI_dom_sf"/>
</dbReference>
<dbReference type="InterPro" id="IPR044275">
    <property type="entry name" value="KRP"/>
</dbReference>
<dbReference type="PANTHER" id="PTHR46776">
    <property type="entry name" value="CYCLIN-DEPENDENT KINASE INHIBITOR 4-RELATED"/>
    <property type="match status" value="1"/>
</dbReference>
<dbReference type="Pfam" id="PF02234">
    <property type="entry name" value="CDI"/>
    <property type="match status" value="1"/>
</dbReference>
<dbReference type="PIRSF" id="PIRSF017811">
    <property type="entry name" value="CDK_inhib_pln"/>
    <property type="match status" value="1"/>
</dbReference>